<dbReference type="EC" id="1.8.1.2" evidence="1"/>
<dbReference type="EMBL" id="CP000931">
    <property type="protein sequence ID" value="ABZ78085.1"/>
    <property type="molecule type" value="Genomic_DNA"/>
</dbReference>
<dbReference type="RefSeq" id="WP_012278605.1">
    <property type="nucleotide sequence ID" value="NC_010334.1"/>
</dbReference>
<dbReference type="SMR" id="B0TTE4"/>
<dbReference type="STRING" id="458817.Shal_3542"/>
<dbReference type="KEGG" id="shl:Shal_3542"/>
<dbReference type="eggNOG" id="COG0155">
    <property type="taxonomic scope" value="Bacteria"/>
</dbReference>
<dbReference type="HOGENOM" id="CLU_001975_3_2_6"/>
<dbReference type="OrthoDB" id="3189055at2"/>
<dbReference type="UniPathway" id="UPA00140">
    <property type="reaction ID" value="UER00207"/>
</dbReference>
<dbReference type="Proteomes" id="UP000001317">
    <property type="component" value="Chromosome"/>
</dbReference>
<dbReference type="GO" id="GO:0009337">
    <property type="term" value="C:sulfite reductase complex (NADPH)"/>
    <property type="evidence" value="ECO:0007669"/>
    <property type="project" value="InterPro"/>
</dbReference>
<dbReference type="GO" id="GO:0051539">
    <property type="term" value="F:4 iron, 4 sulfur cluster binding"/>
    <property type="evidence" value="ECO:0007669"/>
    <property type="project" value="UniProtKB-KW"/>
</dbReference>
<dbReference type="GO" id="GO:0020037">
    <property type="term" value="F:heme binding"/>
    <property type="evidence" value="ECO:0007669"/>
    <property type="project" value="InterPro"/>
</dbReference>
<dbReference type="GO" id="GO:0046872">
    <property type="term" value="F:metal ion binding"/>
    <property type="evidence" value="ECO:0007669"/>
    <property type="project" value="UniProtKB-KW"/>
</dbReference>
<dbReference type="GO" id="GO:0050661">
    <property type="term" value="F:NADP binding"/>
    <property type="evidence" value="ECO:0007669"/>
    <property type="project" value="InterPro"/>
</dbReference>
<dbReference type="GO" id="GO:0050311">
    <property type="term" value="F:sulfite reductase (ferredoxin) activity"/>
    <property type="evidence" value="ECO:0007669"/>
    <property type="project" value="TreeGrafter"/>
</dbReference>
<dbReference type="GO" id="GO:0004783">
    <property type="term" value="F:sulfite reductase (NADPH) activity"/>
    <property type="evidence" value="ECO:0007669"/>
    <property type="project" value="UniProtKB-UniRule"/>
</dbReference>
<dbReference type="GO" id="GO:0019344">
    <property type="term" value="P:cysteine biosynthetic process"/>
    <property type="evidence" value="ECO:0007669"/>
    <property type="project" value="UniProtKB-KW"/>
</dbReference>
<dbReference type="GO" id="GO:0070814">
    <property type="term" value="P:hydrogen sulfide biosynthetic process"/>
    <property type="evidence" value="ECO:0007669"/>
    <property type="project" value="UniProtKB-UniRule"/>
</dbReference>
<dbReference type="GO" id="GO:0000103">
    <property type="term" value="P:sulfate assimilation"/>
    <property type="evidence" value="ECO:0007669"/>
    <property type="project" value="UniProtKB-UniRule"/>
</dbReference>
<dbReference type="FunFam" id="3.30.413.10:FF:000003">
    <property type="entry name" value="Sulfite reductase [NADPH] hemoprotein beta-component"/>
    <property type="match status" value="1"/>
</dbReference>
<dbReference type="FunFam" id="3.30.413.10:FF:000004">
    <property type="entry name" value="Sulfite reductase [NADPH] hemoprotein beta-component"/>
    <property type="match status" value="1"/>
</dbReference>
<dbReference type="Gene3D" id="3.30.413.10">
    <property type="entry name" value="Sulfite Reductase Hemoprotein, domain 1"/>
    <property type="match status" value="2"/>
</dbReference>
<dbReference type="HAMAP" id="MF_01540">
    <property type="entry name" value="CysI"/>
    <property type="match status" value="1"/>
</dbReference>
<dbReference type="InterPro" id="IPR011786">
    <property type="entry name" value="CysI"/>
</dbReference>
<dbReference type="InterPro" id="IPR005117">
    <property type="entry name" value="NiRdtase/SiRdtase_haem-b_fer"/>
</dbReference>
<dbReference type="InterPro" id="IPR036136">
    <property type="entry name" value="Nit/Sulf_reduc_fer-like_dom_sf"/>
</dbReference>
<dbReference type="InterPro" id="IPR006067">
    <property type="entry name" value="NO2/SO3_Rdtase_4Fe4S_dom"/>
</dbReference>
<dbReference type="InterPro" id="IPR045169">
    <property type="entry name" value="NO2/SO3_Rdtase_4Fe4S_prot"/>
</dbReference>
<dbReference type="InterPro" id="IPR045854">
    <property type="entry name" value="NO2/SO3_Rdtase_4Fe4S_sf"/>
</dbReference>
<dbReference type="InterPro" id="IPR006066">
    <property type="entry name" value="NO2/SO3_Rdtase_FeS/sirohaem_BS"/>
</dbReference>
<dbReference type="NCBIfam" id="TIGR02041">
    <property type="entry name" value="CysI"/>
    <property type="match status" value="1"/>
</dbReference>
<dbReference type="NCBIfam" id="NF010029">
    <property type="entry name" value="PRK13504.1"/>
    <property type="match status" value="1"/>
</dbReference>
<dbReference type="PANTHER" id="PTHR11493:SF47">
    <property type="entry name" value="SULFITE REDUCTASE [NADPH] SUBUNIT BETA"/>
    <property type="match status" value="1"/>
</dbReference>
<dbReference type="PANTHER" id="PTHR11493">
    <property type="entry name" value="SULFITE REDUCTASE [NADPH] SUBUNIT BETA-RELATED"/>
    <property type="match status" value="1"/>
</dbReference>
<dbReference type="Pfam" id="PF01077">
    <property type="entry name" value="NIR_SIR"/>
    <property type="match status" value="1"/>
</dbReference>
<dbReference type="Pfam" id="PF03460">
    <property type="entry name" value="NIR_SIR_ferr"/>
    <property type="match status" value="2"/>
</dbReference>
<dbReference type="PRINTS" id="PR00397">
    <property type="entry name" value="SIROHAEM"/>
</dbReference>
<dbReference type="SUPFAM" id="SSF56014">
    <property type="entry name" value="Nitrite and sulphite reductase 4Fe-4S domain-like"/>
    <property type="match status" value="2"/>
</dbReference>
<dbReference type="SUPFAM" id="SSF55124">
    <property type="entry name" value="Nitrite/Sulfite reductase N-terminal domain-like"/>
    <property type="match status" value="2"/>
</dbReference>
<dbReference type="PROSITE" id="PS00365">
    <property type="entry name" value="NIR_SIR"/>
    <property type="match status" value="1"/>
</dbReference>
<feature type="chain" id="PRO_0000388514" description="Sulfite reductase [NADPH] hemoprotein beta-component">
    <location>
        <begin position="1"/>
        <end position="565"/>
    </location>
</feature>
<feature type="binding site" evidence="1">
    <location>
        <position position="429"/>
    </location>
    <ligand>
        <name>[4Fe-4S] cluster</name>
        <dbReference type="ChEBI" id="CHEBI:49883"/>
    </ligand>
</feature>
<feature type="binding site" evidence="1">
    <location>
        <position position="435"/>
    </location>
    <ligand>
        <name>[4Fe-4S] cluster</name>
        <dbReference type="ChEBI" id="CHEBI:49883"/>
    </ligand>
</feature>
<feature type="binding site" evidence="1">
    <location>
        <position position="474"/>
    </location>
    <ligand>
        <name>[4Fe-4S] cluster</name>
        <dbReference type="ChEBI" id="CHEBI:49883"/>
    </ligand>
</feature>
<feature type="binding site" evidence="1">
    <location>
        <position position="478"/>
    </location>
    <ligand>
        <name>[4Fe-4S] cluster</name>
        <dbReference type="ChEBI" id="CHEBI:49883"/>
    </ligand>
</feature>
<feature type="binding site" description="axial binding residue" evidence="1">
    <location>
        <position position="478"/>
    </location>
    <ligand>
        <name>siroheme</name>
        <dbReference type="ChEBI" id="CHEBI:60052"/>
    </ligand>
    <ligandPart>
        <name>Fe</name>
        <dbReference type="ChEBI" id="CHEBI:18248"/>
    </ligandPart>
</feature>
<name>CYSI_SHEHH</name>
<keyword id="KW-0004">4Fe-4S</keyword>
<keyword id="KW-0028">Amino-acid biosynthesis</keyword>
<keyword id="KW-0198">Cysteine biosynthesis</keyword>
<keyword id="KW-0349">Heme</keyword>
<keyword id="KW-0408">Iron</keyword>
<keyword id="KW-0411">Iron-sulfur</keyword>
<keyword id="KW-0479">Metal-binding</keyword>
<keyword id="KW-0521">NADP</keyword>
<keyword id="KW-0560">Oxidoreductase</keyword>
<comment type="function">
    <text evidence="1">Component of the sulfite reductase complex that catalyzes the 6-electron reduction of sulfite to sulfide. This is one of several activities required for the biosynthesis of L-cysteine from sulfate.</text>
</comment>
<comment type="catalytic activity">
    <reaction evidence="1">
        <text>hydrogen sulfide + 3 NADP(+) + 3 H2O = sulfite + 3 NADPH + 4 H(+)</text>
        <dbReference type="Rhea" id="RHEA:13801"/>
        <dbReference type="ChEBI" id="CHEBI:15377"/>
        <dbReference type="ChEBI" id="CHEBI:15378"/>
        <dbReference type="ChEBI" id="CHEBI:17359"/>
        <dbReference type="ChEBI" id="CHEBI:29919"/>
        <dbReference type="ChEBI" id="CHEBI:57783"/>
        <dbReference type="ChEBI" id="CHEBI:58349"/>
        <dbReference type="EC" id="1.8.1.2"/>
    </reaction>
</comment>
<comment type="cofactor">
    <cofactor evidence="1">
        <name>siroheme</name>
        <dbReference type="ChEBI" id="CHEBI:60052"/>
    </cofactor>
    <text evidence="1">Binds 1 siroheme per subunit.</text>
</comment>
<comment type="cofactor">
    <cofactor evidence="1">
        <name>[4Fe-4S] cluster</name>
        <dbReference type="ChEBI" id="CHEBI:49883"/>
    </cofactor>
    <text evidence="1">Binds 1 [4Fe-4S] cluster per subunit.</text>
</comment>
<comment type="pathway">
    <text evidence="1">Sulfur metabolism; hydrogen sulfide biosynthesis; hydrogen sulfide from sulfite (NADPH route): step 1/1.</text>
</comment>
<comment type="subunit">
    <text evidence="1">Alpha(8)-beta(8). The alpha component is a flavoprotein, the beta component is a hemoprotein.</text>
</comment>
<comment type="similarity">
    <text evidence="1">Belongs to the nitrite and sulfite reductase 4Fe-4S domain family.</text>
</comment>
<protein>
    <recommendedName>
        <fullName evidence="1">Sulfite reductase [NADPH] hemoprotein beta-component</fullName>
        <shortName evidence="1">SiR-HP</shortName>
        <shortName evidence="1">SiRHP</shortName>
        <ecNumber evidence="1">1.8.1.2</ecNumber>
    </recommendedName>
</protein>
<sequence>MSEQKLAVNEYLKTDSDYLRGTIQQGLNTAVTGAFSEGDQQLIKFHGFYQQDDRDLRNERKEQKLEPLYSFMLRARVAGGVCSPEQWLAVDKIASNLTSANSIRLTTRQTFQYHGIPKRNLKTIIQDLDREALDSIAACGDVNRNVMCNPNPVESKLHQQAYAYAKQLSDNMLPHTKAYAEIWLDNEKLVTTEGEEVEPVYGQTYLPRKFKMAVAVPPDNDVDVYTNDLGFIAVAEGDELVGFNMVAGGGMGSTHGEVSTFPRLADDFGYIKAEDSLKFAEAVMTIQRDWGNRENRKLSRLKYTIVKHGFETFKAEIEARTGIKFEPRRDVVIGDRGDRYGWKQGVDDNWHLTLFIEGGRVKDLPGQPLQTGLREIAKIHRGDFRMTSNQNMIIAGVASADKEQIEGLARQYGLLGKLITETRGHSIACVALPTCALAMAEAERYFPDFLTKVEALQQKHGFLDQGIVIRMTGCPNGCARPFAAEIGLVGKAPGRYNLYLGASFEGTRLNKLYRENIQEAEILDQLDTLFAQYASQRQAGETFGNYTVRSGVVAAVNDAAKDFHG</sequence>
<reference key="1">
    <citation type="submission" date="2008-01" db="EMBL/GenBank/DDBJ databases">
        <title>Complete sequence of Shewanella halifaxensis HAW-EB4.</title>
        <authorList>
            <consortium name="US DOE Joint Genome Institute"/>
            <person name="Copeland A."/>
            <person name="Lucas S."/>
            <person name="Lapidus A."/>
            <person name="Glavina del Rio T."/>
            <person name="Dalin E."/>
            <person name="Tice H."/>
            <person name="Bruce D."/>
            <person name="Goodwin L."/>
            <person name="Pitluck S."/>
            <person name="Sims D."/>
            <person name="Brettin T."/>
            <person name="Detter J.C."/>
            <person name="Han C."/>
            <person name="Kuske C.R."/>
            <person name="Schmutz J."/>
            <person name="Larimer F."/>
            <person name="Land M."/>
            <person name="Hauser L."/>
            <person name="Kyrpides N."/>
            <person name="Kim E."/>
            <person name="Zhao J.-S."/>
            <person name="Richardson P."/>
        </authorList>
    </citation>
    <scope>NUCLEOTIDE SEQUENCE [LARGE SCALE GENOMIC DNA]</scope>
    <source>
        <strain>HAW-EB4</strain>
    </source>
</reference>
<proteinExistence type="inferred from homology"/>
<gene>
    <name evidence="1" type="primary">cysI</name>
    <name type="ordered locus">Shal_3542</name>
</gene>
<evidence type="ECO:0000255" key="1">
    <source>
        <dbReference type="HAMAP-Rule" id="MF_01540"/>
    </source>
</evidence>
<organism>
    <name type="scientific">Shewanella halifaxensis (strain HAW-EB4)</name>
    <dbReference type="NCBI Taxonomy" id="458817"/>
    <lineage>
        <taxon>Bacteria</taxon>
        <taxon>Pseudomonadati</taxon>
        <taxon>Pseudomonadota</taxon>
        <taxon>Gammaproteobacteria</taxon>
        <taxon>Alteromonadales</taxon>
        <taxon>Shewanellaceae</taxon>
        <taxon>Shewanella</taxon>
    </lineage>
</organism>
<accession>B0TTE4</accession>